<comment type="function">
    <text evidence="1 2">Serine/threonine-protein kinase that activates necroptosis and apoptosis, two parallel forms of cell death. Necroptosis, a programmed cell death process in response to death-inducing TNF-alpha family members, is triggered by RIPK3 following activation by ZBP1. Activated RIPK3 forms a necrosis-inducing complex and mediates phosphorylation of MLKL, promoting MLKL localization to the plasma membrane and execution of programmed necrosis characterized by calcium influx and plasma membrane damage. In addition to TNF-induced necroptosis, necroptosis can also take place in the nucleus in response to orthomyxoviruses infection: following ZBP1 activation, which senses double-stranded Z-RNA structures, nuclear RIPK3 catalyzes phosphorylation and activation of MLKL, promoting disruption of the nuclear envelope and leakage of cellular DNA into the cytosol. Also regulates apoptosis: apoptosis depends on RIPK1, FADD and CASP8, and is independent of MLKL and RIPK3 kinase activity (By similarity). Phosphorylates RIPK1: RIPK1 and RIPK3 undergo reciprocal auto- and trans-phosphorylation (By similarity). In some cell types, also able to restrict viral replication by promoting cell death-independent responses. In response to flavivirus infection in neurons, promotes a cell death-independent pathway that restricts viral replication: together with ZBP1, promotes a death-independent transcriptional program that modifies the cellular metabolism via up-regulation expression of the enzyme ACOD1/IRG1 and production of the metabolite itaconate. Itaconate inhibits the activity of succinate dehydrogenase, generating a metabolic state in neurons that suppresses replication of viral genomes (By similarity). RIPK3 binds to and enhances the activity of three metabolic enzymes: GLUL, GLUD1, and PYGL. These metabolic enzymes may eventually stimulate the tricarboxylic acid cycle and oxidative phosphorylation, which could result in enhanced ROS production (By similarity).</text>
</comment>
<comment type="catalytic activity">
    <reaction evidence="1">
        <text>L-seryl-[protein] + ATP = O-phospho-L-seryl-[protein] + ADP + H(+)</text>
        <dbReference type="Rhea" id="RHEA:17989"/>
        <dbReference type="Rhea" id="RHEA-COMP:9863"/>
        <dbReference type="Rhea" id="RHEA-COMP:11604"/>
        <dbReference type="ChEBI" id="CHEBI:15378"/>
        <dbReference type="ChEBI" id="CHEBI:29999"/>
        <dbReference type="ChEBI" id="CHEBI:30616"/>
        <dbReference type="ChEBI" id="CHEBI:83421"/>
        <dbReference type="ChEBI" id="CHEBI:456216"/>
        <dbReference type="EC" id="2.7.11.1"/>
    </reaction>
</comment>
<comment type="catalytic activity">
    <reaction evidence="1">
        <text>L-threonyl-[protein] + ATP = O-phospho-L-threonyl-[protein] + ADP + H(+)</text>
        <dbReference type="Rhea" id="RHEA:46608"/>
        <dbReference type="Rhea" id="RHEA-COMP:11060"/>
        <dbReference type="Rhea" id="RHEA-COMP:11605"/>
        <dbReference type="ChEBI" id="CHEBI:15378"/>
        <dbReference type="ChEBI" id="CHEBI:30013"/>
        <dbReference type="ChEBI" id="CHEBI:30616"/>
        <dbReference type="ChEBI" id="CHEBI:61977"/>
        <dbReference type="ChEBI" id="CHEBI:456216"/>
        <dbReference type="EC" id="2.7.11.1"/>
    </reaction>
</comment>
<comment type="activity regulation">
    <text evidence="1">Activity is stimulated by ZBP1, which senses double-stranded Z-RNA structures. RIPK3-dependent necroptosis is inhibited by RIPK1: RIPK1 prevents the ZBP1-induced activation of RIPK3 via FADD-mediated recruitment of CASP8, which cleaves RIPK1 and limits TNF-induced necroptosis.</text>
</comment>
<comment type="subunit">
    <text evidence="1 2">Interacts (via RIP homotypic interaction motif) with RIPK1 (via RIP homotypic interaction motif); this interaction induces RIPK1 phosphorylation and formation of a RIPK1-RIPK3 necrosis-inducing complex. Interacts with MLKL; the interaction is direct and triggers necroptosis. Interacts with ZBP1 (via RIP homotypic interaction motif); interaction with ZBP1 activates RIPK3, triggering necroptosis (By similarity). Upon TNF-induced necrosis, the RIPK1-RIPK3 dimer further interacts with PGAM5 and MLKL; the formation of this complex leads to PGAM5 phosphorylation and increase in PGAM5 phosphatase activity. Binds TRAF2 and is recruited to the TNFR-1 signaling complex. Interacts with PYGL, GLUL and GLUD1; these interactions result in activation of these metabolic enzymes. Interacts with BIRC2/c-IAP1, BIRC3/c-IAP2 and XIAP/BIRC4. Interacts with ARHGEF2 (By similarity). Interacts with PELI1 (via atypical FHA domain); the phosphorylated form at Thr-185 binds preferentially to PELI1 (By similarity). Interacts with BUB1B, TRAF2 and STUB1 (By similarity). Interacts with CASP6 (By similarity). Component of the AIM2 PANoptosome complex, a multiprotein complex that drives inflammatory cell death (PANoptosis) (By similarity).</text>
</comment>
<comment type="subcellular location">
    <subcellularLocation>
        <location evidence="1">Cytoplasm</location>
        <location evidence="1">Cytosol</location>
    </subcellularLocation>
    <subcellularLocation>
        <location evidence="1">Nucleus</location>
    </subcellularLocation>
    <text evidence="1">Mainly cytoplasmic. Present in the nucleus in response to influenza A virus (IAV) infection.</text>
</comment>
<comment type="domain">
    <text evidence="2">The RIP homotypic interaction motif (RHIM) mediates interaction with the RHIM motif of RIPK1. Both motifs form a hetero-amyloid serpentine fold, stabilized by hydrophobic packing and featuring an unusual Cys-Ser ladder of alternating Ser (from RIPK1) and Cys (from RIPK3).</text>
</comment>
<comment type="PTM">
    <text evidence="2">RIPK1 and RIPK3 undergo reciprocal auto- and trans-phosphorylation. Autophosphorylated following interaction with ZBP1. Phosphorylation of Ser-201 plays a role in the necroptotic function of RIPK3. Autophosphorylates at Thr-228 and Ser-229 following activation by ZBP1: phosphorylation at these sites is a hallmark of necroptosis and is required for binding MLKL. Phosphorylation at Thr-185 is important for its kinase activity, interaction with PELI1 and for its ability to mediate TNF-induced necroptosis (By similarity).</text>
</comment>
<comment type="PTM">
    <text evidence="2">Polyubiquitinated with 'Lys-48' and 'Lys-63'-linked chains by BIRC2/c-IAP1 and BIRC3/c-IAP2, leading to activation of NF-kappa-B. Ubiquitinated by STUB1 leading to its subsequent proteasome-dependent degradation.</text>
</comment>
<comment type="similarity">
    <text evidence="7">Belongs to the protein kinase superfamily. TKL Ser/Thr protein kinase family.</text>
</comment>
<gene>
    <name evidence="8" type="primary">Ripk3</name>
    <name evidence="1" type="synonym">Rip3</name>
</gene>
<proteinExistence type="evidence at protein level"/>
<feature type="chain" id="PRO_0000086612" description="Receptor-interacting serine/threonine-protein kinase 3">
    <location>
        <begin position="1"/>
        <end position="478"/>
    </location>
</feature>
<feature type="domain" description="Protein kinase" evidence="3">
    <location>
        <begin position="22"/>
        <end position="290"/>
    </location>
</feature>
<feature type="region of interest" description="Disordered" evidence="5">
    <location>
        <begin position="311"/>
        <end position="330"/>
    </location>
</feature>
<feature type="region of interest" description="Disordered" evidence="5">
    <location>
        <begin position="362"/>
        <end position="429"/>
    </location>
</feature>
<feature type="short sequence motif" description="RIP homotypic interaction motif (RHIM)" evidence="2">
    <location>
        <begin position="437"/>
        <end position="461"/>
    </location>
</feature>
<feature type="compositionally biased region" description="Basic and acidic residues" evidence="5">
    <location>
        <begin position="313"/>
        <end position="330"/>
    </location>
</feature>
<feature type="compositionally biased region" description="Polar residues" evidence="5">
    <location>
        <begin position="376"/>
        <end position="385"/>
    </location>
</feature>
<feature type="compositionally biased region" description="Polar residues" evidence="5">
    <location>
        <begin position="413"/>
        <end position="429"/>
    </location>
</feature>
<feature type="active site" description="Proton acceptor" evidence="3 4">
    <location>
        <position position="143"/>
    </location>
</feature>
<feature type="binding site" evidence="3">
    <location>
        <begin position="28"/>
        <end position="36"/>
    </location>
    <ligand>
        <name>ATP</name>
        <dbReference type="ChEBI" id="CHEBI:30616"/>
    </ligand>
</feature>
<feature type="binding site" evidence="3">
    <location>
        <position position="51"/>
    </location>
    <ligand>
        <name>ATP</name>
        <dbReference type="ChEBI" id="CHEBI:30616"/>
    </ligand>
</feature>
<feature type="modified residue" description="Phosphoserine" evidence="1">
    <location>
        <position position="2"/>
    </location>
</feature>
<feature type="modified residue" description="Phosphoserine" evidence="1">
    <location>
        <position position="165"/>
    </location>
</feature>
<feature type="modified residue" description="Phosphothreonine" evidence="2">
    <location>
        <position position="185"/>
    </location>
</feature>
<feature type="modified residue" description="Phosphoserine; by autocatalysis" evidence="2">
    <location>
        <position position="201"/>
    </location>
</feature>
<feature type="modified residue" description="Phosphothreonine" evidence="1">
    <location>
        <position position="228"/>
    </location>
</feature>
<feature type="modified residue" description="Phosphoserine; by autocatalysis" evidence="2">
    <location>
        <position position="229"/>
    </location>
</feature>
<feature type="modified residue" description="Phosphothreonine" evidence="1">
    <location>
        <position position="254"/>
    </location>
</feature>
<feature type="modified residue" description="Phosphoserine" evidence="1">
    <location>
        <position position="301"/>
    </location>
</feature>
<feature type="modified residue" description="Phosphoserine" evidence="1">
    <location>
        <position position="323"/>
    </location>
</feature>
<feature type="modified residue" description="Phosphothreonine" evidence="1">
    <location>
        <position position="335"/>
    </location>
</feature>
<feature type="modified residue" description="Phosphoserine" evidence="1">
    <location>
        <position position="350"/>
    </location>
</feature>
<feature type="modified residue" description="Phosphoserine" evidence="1">
    <location>
        <position position="369"/>
    </location>
</feature>
<feature type="modified residue" description="Phosphoserine" evidence="1">
    <location>
        <position position="380"/>
    </location>
</feature>
<feature type="modified residue" description="Phosphothreonine" evidence="1">
    <location>
        <position position="392"/>
    </location>
</feature>
<feature type="modified residue" description="Omega-N-methylarginine" evidence="1">
    <location>
        <position position="474"/>
    </location>
</feature>
<feature type="sequence conflict" description="In Ref. 1; AAD02059." evidence="7" ref="1">
    <original>P</original>
    <variation>L</variation>
    <location>
        <position position="153"/>
    </location>
</feature>
<keyword id="KW-0053">Apoptosis</keyword>
<keyword id="KW-0067">ATP-binding</keyword>
<keyword id="KW-0963">Cytoplasm</keyword>
<keyword id="KW-0418">Kinase</keyword>
<keyword id="KW-0488">Methylation</keyword>
<keyword id="KW-1210">Necrosis</keyword>
<keyword id="KW-0547">Nucleotide-binding</keyword>
<keyword id="KW-0539">Nucleus</keyword>
<keyword id="KW-0597">Phosphoprotein</keyword>
<keyword id="KW-1185">Reference proteome</keyword>
<keyword id="KW-0723">Serine/threonine-protein kinase</keyword>
<keyword id="KW-0808">Transferase</keyword>
<keyword id="KW-0832">Ubl conjugation</keyword>
<reference key="1">
    <citation type="submission" date="2001-05" db="EMBL/GenBank/DDBJ databases">
        <title>A homocysteine-respondent gene cloned from WKY VSMCs by differential display.</title>
        <authorList>
            <person name="Chen K.H."/>
            <person name="Tang J."/>
        </authorList>
    </citation>
    <scope>NUCLEOTIDE SEQUENCE [MRNA]</scope>
    <source>
        <strain>Wistar Kyoto</strain>
    </source>
</reference>
<reference key="2">
    <citation type="journal article" date="2004" name="Nature">
        <title>Genome sequence of the Brown Norway rat yields insights into mammalian evolution.</title>
        <authorList>
            <person name="Gibbs R.A."/>
            <person name="Weinstock G.M."/>
            <person name="Metzker M.L."/>
            <person name="Muzny D.M."/>
            <person name="Sodergren E.J."/>
            <person name="Scherer S."/>
            <person name="Scott G."/>
            <person name="Steffen D."/>
            <person name="Worley K.C."/>
            <person name="Burch P.E."/>
            <person name="Okwuonu G."/>
            <person name="Hines S."/>
            <person name="Lewis L."/>
            <person name="Deramo C."/>
            <person name="Delgado O."/>
            <person name="Dugan-Rocha S."/>
            <person name="Miner G."/>
            <person name="Morgan M."/>
            <person name="Hawes A."/>
            <person name="Gill R."/>
            <person name="Holt R.A."/>
            <person name="Adams M.D."/>
            <person name="Amanatides P.G."/>
            <person name="Baden-Tillson H."/>
            <person name="Barnstead M."/>
            <person name="Chin S."/>
            <person name="Evans C.A."/>
            <person name="Ferriera S."/>
            <person name="Fosler C."/>
            <person name="Glodek A."/>
            <person name="Gu Z."/>
            <person name="Jennings D."/>
            <person name="Kraft C.L."/>
            <person name="Nguyen T."/>
            <person name="Pfannkoch C.M."/>
            <person name="Sitter C."/>
            <person name="Sutton G.G."/>
            <person name="Venter J.C."/>
            <person name="Woodage T."/>
            <person name="Smith D."/>
            <person name="Lee H.-M."/>
            <person name="Gustafson E."/>
            <person name="Cahill P."/>
            <person name="Kana A."/>
            <person name="Doucette-Stamm L."/>
            <person name="Weinstock K."/>
            <person name="Fechtel K."/>
            <person name="Weiss R.B."/>
            <person name="Dunn D.M."/>
            <person name="Green E.D."/>
            <person name="Blakesley R.W."/>
            <person name="Bouffard G.G."/>
            <person name="De Jong P.J."/>
            <person name="Osoegawa K."/>
            <person name="Zhu B."/>
            <person name="Marra M."/>
            <person name="Schein J."/>
            <person name="Bosdet I."/>
            <person name="Fjell C."/>
            <person name="Jones S."/>
            <person name="Krzywinski M."/>
            <person name="Mathewson C."/>
            <person name="Siddiqui A."/>
            <person name="Wye N."/>
            <person name="McPherson J."/>
            <person name="Zhao S."/>
            <person name="Fraser C.M."/>
            <person name="Shetty J."/>
            <person name="Shatsman S."/>
            <person name="Geer K."/>
            <person name="Chen Y."/>
            <person name="Abramzon S."/>
            <person name="Nierman W.C."/>
            <person name="Havlak P.H."/>
            <person name="Chen R."/>
            <person name="Durbin K.J."/>
            <person name="Egan A."/>
            <person name="Ren Y."/>
            <person name="Song X.-Z."/>
            <person name="Li B."/>
            <person name="Liu Y."/>
            <person name="Qin X."/>
            <person name="Cawley S."/>
            <person name="Cooney A.J."/>
            <person name="D'Souza L.M."/>
            <person name="Martin K."/>
            <person name="Wu J.Q."/>
            <person name="Gonzalez-Garay M.L."/>
            <person name="Jackson A.R."/>
            <person name="Kalafus K.J."/>
            <person name="McLeod M.P."/>
            <person name="Milosavljevic A."/>
            <person name="Virk D."/>
            <person name="Volkov A."/>
            <person name="Wheeler D.A."/>
            <person name="Zhang Z."/>
            <person name="Bailey J.A."/>
            <person name="Eichler E.E."/>
            <person name="Tuzun E."/>
            <person name="Birney E."/>
            <person name="Mongin E."/>
            <person name="Ureta-Vidal A."/>
            <person name="Woodwark C."/>
            <person name="Zdobnov E."/>
            <person name="Bork P."/>
            <person name="Suyama M."/>
            <person name="Torrents D."/>
            <person name="Alexandersson M."/>
            <person name="Trask B.J."/>
            <person name="Young J.M."/>
            <person name="Huang H."/>
            <person name="Wang H."/>
            <person name="Xing H."/>
            <person name="Daniels S."/>
            <person name="Gietzen D."/>
            <person name="Schmidt J."/>
            <person name="Stevens K."/>
            <person name="Vitt U."/>
            <person name="Wingrove J."/>
            <person name="Camara F."/>
            <person name="Mar Alba M."/>
            <person name="Abril J.F."/>
            <person name="Guigo R."/>
            <person name="Smit A."/>
            <person name="Dubchak I."/>
            <person name="Rubin E.M."/>
            <person name="Couronne O."/>
            <person name="Poliakov A."/>
            <person name="Huebner N."/>
            <person name="Ganten D."/>
            <person name="Goesele C."/>
            <person name="Hummel O."/>
            <person name="Kreitler T."/>
            <person name="Lee Y.-A."/>
            <person name="Monti J."/>
            <person name="Schulz H."/>
            <person name="Zimdahl H."/>
            <person name="Himmelbauer H."/>
            <person name="Lehrach H."/>
            <person name="Jacob H.J."/>
            <person name="Bromberg S."/>
            <person name="Gullings-Handley J."/>
            <person name="Jensen-Seaman M.I."/>
            <person name="Kwitek A.E."/>
            <person name="Lazar J."/>
            <person name="Pasko D."/>
            <person name="Tonellato P.J."/>
            <person name="Twigger S."/>
            <person name="Ponting C.P."/>
            <person name="Duarte J.M."/>
            <person name="Rice S."/>
            <person name="Goodstadt L."/>
            <person name="Beatson S.A."/>
            <person name="Emes R.D."/>
            <person name="Winter E.E."/>
            <person name="Webber C."/>
            <person name="Brandt P."/>
            <person name="Nyakatura G."/>
            <person name="Adetobi M."/>
            <person name="Chiaromonte F."/>
            <person name="Elnitski L."/>
            <person name="Eswara P."/>
            <person name="Hardison R.C."/>
            <person name="Hou M."/>
            <person name="Kolbe D."/>
            <person name="Makova K."/>
            <person name="Miller W."/>
            <person name="Nekrutenko A."/>
            <person name="Riemer C."/>
            <person name="Schwartz S."/>
            <person name="Taylor J."/>
            <person name="Yang S."/>
            <person name="Zhang Y."/>
            <person name="Lindpaintner K."/>
            <person name="Andrews T.D."/>
            <person name="Caccamo M."/>
            <person name="Clamp M."/>
            <person name="Clarke L."/>
            <person name="Curwen V."/>
            <person name="Durbin R.M."/>
            <person name="Eyras E."/>
            <person name="Searle S.M."/>
            <person name="Cooper G.M."/>
            <person name="Batzoglou S."/>
            <person name="Brudno M."/>
            <person name="Sidow A."/>
            <person name="Stone E.A."/>
            <person name="Payseur B.A."/>
            <person name="Bourque G."/>
            <person name="Lopez-Otin C."/>
            <person name="Puente X.S."/>
            <person name="Chakrabarti K."/>
            <person name="Chatterji S."/>
            <person name="Dewey C."/>
            <person name="Pachter L."/>
            <person name="Bray N."/>
            <person name="Yap V.B."/>
            <person name="Caspi A."/>
            <person name="Tesler G."/>
            <person name="Pevzner P.A."/>
            <person name="Haussler D."/>
            <person name="Roskin K.M."/>
            <person name="Baertsch R."/>
            <person name="Clawson H."/>
            <person name="Furey T.S."/>
            <person name="Hinrichs A.S."/>
            <person name="Karolchik D."/>
            <person name="Kent W.J."/>
            <person name="Rosenbloom K.R."/>
            <person name="Trumbower H."/>
            <person name="Weirauch M."/>
            <person name="Cooper D.N."/>
            <person name="Stenson P.D."/>
            <person name="Ma B."/>
            <person name="Brent M."/>
            <person name="Arumugam M."/>
            <person name="Shteynberg D."/>
            <person name="Copley R.R."/>
            <person name="Taylor M.S."/>
            <person name="Riethman H."/>
            <person name="Mudunuri U."/>
            <person name="Peterson J."/>
            <person name="Guyer M."/>
            <person name="Felsenfeld A."/>
            <person name="Old S."/>
            <person name="Mockrin S."/>
            <person name="Collins F.S."/>
        </authorList>
    </citation>
    <scope>NUCLEOTIDE SEQUENCE [LARGE SCALE GENOMIC DNA]</scope>
    <source>
        <strain>Brown Norway</strain>
    </source>
</reference>
<reference key="3">
    <citation type="submission" date="2005-07" db="EMBL/GenBank/DDBJ databases">
        <authorList>
            <person name="Mural R.J."/>
            <person name="Adams M.D."/>
            <person name="Myers E.W."/>
            <person name="Smith H.O."/>
            <person name="Venter J.C."/>
        </authorList>
    </citation>
    <scope>NUCLEOTIDE SEQUENCE [LARGE SCALE GENOMIC DNA]</scope>
</reference>
<reference key="4">
    <citation type="journal article" date="2004" name="Genome Res.">
        <title>The status, quality, and expansion of the NIH full-length cDNA project: the Mammalian Gene Collection (MGC).</title>
        <authorList>
            <consortium name="The MGC Project Team"/>
        </authorList>
    </citation>
    <scope>NUCLEOTIDE SEQUENCE [LARGE SCALE MRNA]</scope>
    <source>
        <tissue>Spleen</tissue>
    </source>
</reference>
<reference key="5">
    <citation type="journal article" date="2012" name="Nat. Commun.">
        <title>Quantitative maps of protein phosphorylation sites across 14 different rat organs and tissues.</title>
        <authorList>
            <person name="Lundby A."/>
            <person name="Secher A."/>
            <person name="Lage K."/>
            <person name="Nordsborg N.B."/>
            <person name="Dmytriyev A."/>
            <person name="Lundby C."/>
            <person name="Olsen J.V."/>
        </authorList>
    </citation>
    <scope>IDENTIFICATION BY MASS SPECTROMETRY [LARGE SCALE ANALYSIS]</scope>
</reference>
<name>RIPK3_RAT</name>
<protein>
    <recommendedName>
        <fullName evidence="7">Receptor-interacting serine/threonine-protein kinase 3</fullName>
        <ecNumber>2.7.11.1</ecNumber>
    </recommendedName>
    <alternativeName>
        <fullName evidence="6">Homocysteine respondent protein HCYP2</fullName>
    </alternativeName>
    <alternativeName>
        <fullName evidence="1">RIP-like protein kinase 3</fullName>
    </alternativeName>
    <alternativeName>
        <fullName evidence="1">Receptor-interacting protein 3</fullName>
        <shortName evidence="1">RIP-3</shortName>
    </alternativeName>
</protein>
<accession>Q9Z2P5</accession>
<accession>B0BMV6</accession>
<organism>
    <name type="scientific">Rattus norvegicus</name>
    <name type="common">Rat</name>
    <dbReference type="NCBI Taxonomy" id="10116"/>
    <lineage>
        <taxon>Eukaryota</taxon>
        <taxon>Metazoa</taxon>
        <taxon>Chordata</taxon>
        <taxon>Craniata</taxon>
        <taxon>Vertebrata</taxon>
        <taxon>Euteleostomi</taxon>
        <taxon>Mammalia</taxon>
        <taxon>Eutheria</taxon>
        <taxon>Euarchontoglires</taxon>
        <taxon>Glires</taxon>
        <taxon>Rodentia</taxon>
        <taxon>Myomorpha</taxon>
        <taxon>Muroidea</taxon>
        <taxon>Muridae</taxon>
        <taxon>Murinae</taxon>
        <taxon>Rattus</taxon>
    </lineage>
</organism>
<sequence>MSSVKLWLNGASSISLVGSEELENLGFVGKGGFGAVFRARHTAWNLDVAVKIVNSKKISREVKAMVNLRHENVLLLLGVTENLEWDYVYGPALVTGFMENGSLSGLLQPSCPRPWPLLCRLLEEVVLGMCYLHSLNPSLLHRDLKPSNVLLDPELHAKLADFGLSTFQGGSQSGSGSGSRDSGGTLAYLAPELLDNDGKASKASDVYSFGVLVWTVLAGREAEVVDKTSLIRGAVCNRQRRPPLTELPPDSPETPGLEGLKELMTHCWSSEPKDRPSFQDCESKTNNVYILVQDKVDAAVSKVKHYLSQYRSSDTKLSARESSQKGTEVDCPRETIVYEMLDRLHLEEPSGSVPERLTSLTERRGKEASFGHATPAGTSSDTLAGTPQIPHTLPSRGTTPRPAFTETPGPDPQRNQGDGRNSNPWYTWNAPNPMTGLQSIVLNNCSEVQIGQHNCMSVQPRTAFPKKEPAQFGRGRGW</sequence>
<dbReference type="EC" id="2.7.11.1"/>
<dbReference type="EMBL" id="AF036537">
    <property type="protein sequence ID" value="AAD02059.2"/>
    <property type="molecule type" value="mRNA"/>
</dbReference>
<dbReference type="EMBL" id="AABR06083269">
    <property type="status" value="NOT_ANNOTATED_CDS"/>
    <property type="molecule type" value="Genomic_DNA"/>
</dbReference>
<dbReference type="EMBL" id="CH474049">
    <property type="protein sequence ID" value="EDM14285.1"/>
    <property type="molecule type" value="Genomic_DNA"/>
</dbReference>
<dbReference type="EMBL" id="CH474049">
    <property type="protein sequence ID" value="EDM14286.1"/>
    <property type="molecule type" value="Genomic_DNA"/>
</dbReference>
<dbReference type="EMBL" id="BC158580">
    <property type="protein sequence ID" value="AAI58581.1"/>
    <property type="molecule type" value="mRNA"/>
</dbReference>
<dbReference type="RefSeq" id="NP_647558.2">
    <property type="nucleotide sequence ID" value="NM_139342.2"/>
</dbReference>
<dbReference type="RefSeq" id="XP_063130035.1">
    <property type="nucleotide sequence ID" value="XM_063273965.1"/>
</dbReference>
<dbReference type="RefSeq" id="XP_063130036.1">
    <property type="nucleotide sequence ID" value="XM_063273966.1"/>
</dbReference>
<dbReference type="SMR" id="Q9Z2P5"/>
<dbReference type="FunCoup" id="Q9Z2P5">
    <property type="interactions" value="208"/>
</dbReference>
<dbReference type="IntAct" id="Q9Z2P5">
    <property type="interactions" value="1"/>
</dbReference>
<dbReference type="MINT" id="Q9Z2P5"/>
<dbReference type="STRING" id="10116.ENSRNOP00000027759"/>
<dbReference type="GlyGen" id="Q9Z2P5">
    <property type="glycosylation" value="1 site, 1 O-linked glycan (1 site)"/>
</dbReference>
<dbReference type="iPTMnet" id="Q9Z2P5"/>
<dbReference type="PhosphoSitePlus" id="Q9Z2P5"/>
<dbReference type="PaxDb" id="10116-ENSRNOP00000027759"/>
<dbReference type="GeneID" id="246240"/>
<dbReference type="KEGG" id="rno:246240"/>
<dbReference type="UCSC" id="RGD:628899">
    <property type="organism name" value="rat"/>
</dbReference>
<dbReference type="AGR" id="RGD:628899"/>
<dbReference type="CTD" id="11035"/>
<dbReference type="RGD" id="628899">
    <property type="gene designation" value="Ripk3"/>
</dbReference>
<dbReference type="VEuPathDB" id="HostDB:ENSRNOG00000020465"/>
<dbReference type="eggNOG" id="KOG0192">
    <property type="taxonomic scope" value="Eukaryota"/>
</dbReference>
<dbReference type="HOGENOM" id="CLU_559689_0_0_1"/>
<dbReference type="InParanoid" id="Q9Z2P5"/>
<dbReference type="TreeFam" id="TF106506"/>
<dbReference type="Reactome" id="R-RNO-2562578">
    <property type="pathway name" value="TRIF-mediated programmed cell death"/>
</dbReference>
<dbReference type="Reactome" id="R-RNO-3295583">
    <property type="pathway name" value="TRP channels"/>
</dbReference>
<dbReference type="Reactome" id="R-RNO-5213460">
    <property type="pathway name" value="RIPK1-mediated regulated necrosis"/>
</dbReference>
<dbReference type="Reactome" id="R-RNO-5675482">
    <property type="pathway name" value="Regulation of necroptotic cell death"/>
</dbReference>
<dbReference type="Reactome" id="R-RNO-937041">
    <property type="pathway name" value="IKK complex recruitment mediated by RIP1"/>
</dbReference>
<dbReference type="PRO" id="PR:Q9Z2P5"/>
<dbReference type="Proteomes" id="UP000002494">
    <property type="component" value="Chromosome 15"/>
</dbReference>
<dbReference type="Proteomes" id="UP000234681">
    <property type="component" value="Chromosome 15"/>
</dbReference>
<dbReference type="Bgee" id="ENSRNOG00000020465">
    <property type="expression patterns" value="Expressed in spleen and 18 other cell types or tissues"/>
</dbReference>
<dbReference type="GO" id="GO:0005737">
    <property type="term" value="C:cytoplasm"/>
    <property type="evidence" value="ECO:0000250"/>
    <property type="project" value="UniProtKB"/>
</dbReference>
<dbReference type="GO" id="GO:0005829">
    <property type="term" value="C:cytosol"/>
    <property type="evidence" value="ECO:0000250"/>
    <property type="project" value="UniProtKB"/>
</dbReference>
<dbReference type="GO" id="GO:0005634">
    <property type="term" value="C:nucleus"/>
    <property type="evidence" value="ECO:0000250"/>
    <property type="project" value="UniProtKB"/>
</dbReference>
<dbReference type="GO" id="GO:0032991">
    <property type="term" value="C:protein-containing complex"/>
    <property type="evidence" value="ECO:0000266"/>
    <property type="project" value="RGD"/>
</dbReference>
<dbReference type="GO" id="GO:0005524">
    <property type="term" value="F:ATP binding"/>
    <property type="evidence" value="ECO:0007669"/>
    <property type="project" value="UniProtKB-KW"/>
</dbReference>
<dbReference type="GO" id="GO:0042802">
    <property type="term" value="F:identical protein binding"/>
    <property type="evidence" value="ECO:0000266"/>
    <property type="project" value="RGD"/>
</dbReference>
<dbReference type="GO" id="GO:0004672">
    <property type="term" value="F:protein kinase activity"/>
    <property type="evidence" value="ECO:0000250"/>
    <property type="project" value="UniProtKB"/>
</dbReference>
<dbReference type="GO" id="GO:0106310">
    <property type="term" value="F:protein serine kinase activity"/>
    <property type="evidence" value="ECO:0007669"/>
    <property type="project" value="RHEA"/>
</dbReference>
<dbReference type="GO" id="GO:0004674">
    <property type="term" value="F:protein serine/threonine kinase activity"/>
    <property type="evidence" value="ECO:0000250"/>
    <property type="project" value="UniProtKB"/>
</dbReference>
<dbReference type="GO" id="GO:0044877">
    <property type="term" value="F:protein-containing complex binding"/>
    <property type="evidence" value="ECO:0000266"/>
    <property type="project" value="RGD"/>
</dbReference>
<dbReference type="GO" id="GO:0032147">
    <property type="term" value="P:activation of protein kinase activity"/>
    <property type="evidence" value="ECO:0000250"/>
    <property type="project" value="UniProtKB"/>
</dbReference>
<dbReference type="GO" id="GO:1990000">
    <property type="term" value="P:amyloid fibril formation"/>
    <property type="evidence" value="ECO:0000250"/>
    <property type="project" value="UniProtKB"/>
</dbReference>
<dbReference type="GO" id="GO:0006915">
    <property type="term" value="P:apoptotic process"/>
    <property type="evidence" value="ECO:0007669"/>
    <property type="project" value="UniProtKB-KW"/>
</dbReference>
<dbReference type="GO" id="GO:0070301">
    <property type="term" value="P:cellular response to hydrogen peroxide"/>
    <property type="evidence" value="ECO:0000266"/>
    <property type="project" value="RGD"/>
</dbReference>
<dbReference type="GO" id="GO:0051607">
    <property type="term" value="P:defense response to virus"/>
    <property type="evidence" value="ECO:0000250"/>
    <property type="project" value="UniProtKB"/>
</dbReference>
<dbReference type="GO" id="GO:0097528">
    <property type="term" value="P:execution phase of necroptosis"/>
    <property type="evidence" value="ECO:0000250"/>
    <property type="project" value="UniProtKB"/>
</dbReference>
<dbReference type="GO" id="GO:0048535">
    <property type="term" value="P:lymph node development"/>
    <property type="evidence" value="ECO:0000250"/>
    <property type="project" value="UniProtKB"/>
</dbReference>
<dbReference type="GO" id="GO:0070266">
    <property type="term" value="P:necroptotic process"/>
    <property type="evidence" value="ECO:0000250"/>
    <property type="project" value="UniProtKB"/>
</dbReference>
<dbReference type="GO" id="GO:0097527">
    <property type="term" value="P:necroptotic signaling pathway"/>
    <property type="evidence" value="ECO:0000266"/>
    <property type="project" value="RGD"/>
</dbReference>
<dbReference type="GO" id="GO:0038061">
    <property type="term" value="P:non-canonical NF-kappaB signal transduction"/>
    <property type="evidence" value="ECO:0000266"/>
    <property type="project" value="RGD"/>
</dbReference>
<dbReference type="GO" id="GO:2001244">
    <property type="term" value="P:positive regulation of intrinsic apoptotic signaling pathway"/>
    <property type="evidence" value="ECO:0000266"/>
    <property type="project" value="RGD"/>
</dbReference>
<dbReference type="GO" id="GO:0060545">
    <property type="term" value="P:positive regulation of necroptotic process"/>
    <property type="evidence" value="ECO:0000250"/>
    <property type="project" value="UniProtKB"/>
</dbReference>
<dbReference type="GO" id="GO:2000379">
    <property type="term" value="P:positive regulation of reactive oxygen species metabolic process"/>
    <property type="evidence" value="ECO:0000266"/>
    <property type="project" value="RGD"/>
</dbReference>
<dbReference type="GO" id="GO:0097300">
    <property type="term" value="P:programmed necrotic cell death"/>
    <property type="evidence" value="ECO:0000266"/>
    <property type="project" value="RGD"/>
</dbReference>
<dbReference type="GO" id="GO:0072593">
    <property type="term" value="P:reactive oxygen species metabolic process"/>
    <property type="evidence" value="ECO:0000266"/>
    <property type="project" value="RGD"/>
</dbReference>
<dbReference type="GO" id="GO:0046006">
    <property type="term" value="P:regulation of activated T cell proliferation"/>
    <property type="evidence" value="ECO:0000250"/>
    <property type="project" value="UniProtKB"/>
</dbReference>
<dbReference type="GO" id="GO:0070235">
    <property type="term" value="P:regulation of activation-induced cell death of T cells"/>
    <property type="evidence" value="ECO:0000250"/>
    <property type="project" value="UniProtKB"/>
</dbReference>
<dbReference type="GO" id="GO:0002819">
    <property type="term" value="P:regulation of adaptive immune response"/>
    <property type="evidence" value="ECO:0000250"/>
    <property type="project" value="UniProtKB"/>
</dbReference>
<dbReference type="GO" id="GO:0042981">
    <property type="term" value="P:regulation of apoptotic process"/>
    <property type="evidence" value="ECO:0000250"/>
    <property type="project" value="UniProtKB"/>
</dbReference>
<dbReference type="GO" id="GO:2000452">
    <property type="term" value="P:regulation of CD8-positive, alpha-beta cytotoxic T cell extravasation"/>
    <property type="evidence" value="ECO:0000250"/>
    <property type="project" value="UniProtKB"/>
</dbReference>
<dbReference type="GO" id="GO:2000377">
    <property type="term" value="P:regulation of reactive oxygen species metabolic process"/>
    <property type="evidence" value="ECO:0000266"/>
    <property type="project" value="RGD"/>
</dbReference>
<dbReference type="GO" id="GO:0001914">
    <property type="term" value="P:regulation of T cell mediated cytotoxicity"/>
    <property type="evidence" value="ECO:0000250"/>
    <property type="project" value="UniProtKB"/>
</dbReference>
<dbReference type="GO" id="GO:0032649">
    <property type="term" value="P:regulation of type II interferon production"/>
    <property type="evidence" value="ECO:0000250"/>
    <property type="project" value="UniProtKB"/>
</dbReference>
<dbReference type="GO" id="GO:0007165">
    <property type="term" value="P:signal transduction"/>
    <property type="evidence" value="ECO:0000318"/>
    <property type="project" value="GO_Central"/>
</dbReference>
<dbReference type="GO" id="GO:0048536">
    <property type="term" value="P:spleen development"/>
    <property type="evidence" value="ECO:0000250"/>
    <property type="project" value="UniProtKB"/>
</dbReference>
<dbReference type="GO" id="GO:0033077">
    <property type="term" value="P:T cell differentiation in thymus"/>
    <property type="evidence" value="ECO:0000250"/>
    <property type="project" value="UniProtKB"/>
</dbReference>
<dbReference type="GO" id="GO:0043029">
    <property type="term" value="P:T cell homeostasis"/>
    <property type="evidence" value="ECO:0000250"/>
    <property type="project" value="UniProtKB"/>
</dbReference>
<dbReference type="GO" id="GO:0048538">
    <property type="term" value="P:thymus development"/>
    <property type="evidence" value="ECO:0000250"/>
    <property type="project" value="UniProtKB"/>
</dbReference>
<dbReference type="FunFam" id="1.10.510.10:FF:000661">
    <property type="entry name" value="Receptor-interacting serine/threonine-protein kinase 3"/>
    <property type="match status" value="1"/>
</dbReference>
<dbReference type="Gene3D" id="1.10.510.10">
    <property type="entry name" value="Transferase(Phosphotransferase) domain 1"/>
    <property type="match status" value="1"/>
</dbReference>
<dbReference type="InterPro" id="IPR011009">
    <property type="entry name" value="Kinase-like_dom_sf"/>
</dbReference>
<dbReference type="InterPro" id="IPR000719">
    <property type="entry name" value="Prot_kinase_dom"/>
</dbReference>
<dbReference type="InterPro" id="IPR017441">
    <property type="entry name" value="Protein_kinase_ATP_BS"/>
</dbReference>
<dbReference type="InterPro" id="IPR025735">
    <property type="entry name" value="RHIM"/>
</dbReference>
<dbReference type="InterPro" id="IPR008271">
    <property type="entry name" value="Ser/Thr_kinase_AS"/>
</dbReference>
<dbReference type="InterPro" id="IPR051681">
    <property type="entry name" value="Ser/Thr_Kinases-Pseudokinases"/>
</dbReference>
<dbReference type="PANTHER" id="PTHR44329:SF297">
    <property type="entry name" value="RECEPTOR-INTERACTING SERINE_THREONINE-PROTEIN KINASE 3"/>
    <property type="match status" value="1"/>
</dbReference>
<dbReference type="PANTHER" id="PTHR44329">
    <property type="entry name" value="SERINE/THREONINE-PROTEIN KINASE TNNI3K-RELATED"/>
    <property type="match status" value="1"/>
</dbReference>
<dbReference type="Pfam" id="PF00069">
    <property type="entry name" value="Pkinase"/>
    <property type="match status" value="1"/>
</dbReference>
<dbReference type="Pfam" id="PF12721">
    <property type="entry name" value="RHIM"/>
    <property type="match status" value="1"/>
</dbReference>
<dbReference type="SMART" id="SM00220">
    <property type="entry name" value="S_TKc"/>
    <property type="match status" value="1"/>
</dbReference>
<dbReference type="SUPFAM" id="SSF56112">
    <property type="entry name" value="Protein kinase-like (PK-like)"/>
    <property type="match status" value="1"/>
</dbReference>
<dbReference type="PROSITE" id="PS00107">
    <property type="entry name" value="PROTEIN_KINASE_ATP"/>
    <property type="match status" value="1"/>
</dbReference>
<dbReference type="PROSITE" id="PS50011">
    <property type="entry name" value="PROTEIN_KINASE_DOM"/>
    <property type="match status" value="1"/>
</dbReference>
<dbReference type="PROSITE" id="PS00108">
    <property type="entry name" value="PROTEIN_KINASE_ST"/>
    <property type="match status" value="1"/>
</dbReference>
<evidence type="ECO:0000250" key="1">
    <source>
        <dbReference type="UniProtKB" id="Q9QZL0"/>
    </source>
</evidence>
<evidence type="ECO:0000250" key="2">
    <source>
        <dbReference type="UniProtKB" id="Q9Y572"/>
    </source>
</evidence>
<evidence type="ECO:0000255" key="3">
    <source>
        <dbReference type="PROSITE-ProRule" id="PRU00159"/>
    </source>
</evidence>
<evidence type="ECO:0000255" key="4">
    <source>
        <dbReference type="PROSITE-ProRule" id="PRU10027"/>
    </source>
</evidence>
<evidence type="ECO:0000256" key="5">
    <source>
        <dbReference type="SAM" id="MobiDB-lite"/>
    </source>
</evidence>
<evidence type="ECO:0000303" key="6">
    <source>
    </source>
</evidence>
<evidence type="ECO:0000305" key="7"/>
<evidence type="ECO:0000312" key="8">
    <source>
        <dbReference type="RGD" id="628899"/>
    </source>
</evidence>